<name>TM41B_MOUSE</name>
<gene>
    <name evidence="9 11" type="primary">Tmem41b</name>
    <name evidence="11" type="synonym">D7Ertd743e</name>
    <name evidence="7" type="synonym">Kiaa0033</name>
</gene>
<reference key="1">
    <citation type="journal article" date="2004" name="DNA Res.">
        <title>Prediction of the coding sequences of mouse homologues of KIAA gene: IV. The complete nucleotide sequences of 500 mouse KIAA-homologous cDNAs identified by screening of terminal sequences of cDNA clones randomly sampled from size-fractionated libraries.</title>
        <authorList>
            <person name="Okazaki N."/>
            <person name="Kikuno R."/>
            <person name="Ohara R."/>
            <person name="Inamoto S."/>
            <person name="Koseki H."/>
            <person name="Hiraoka S."/>
            <person name="Saga Y."/>
            <person name="Seino S."/>
            <person name="Nishimura M."/>
            <person name="Kaisho T."/>
            <person name="Hoshino K."/>
            <person name="Kitamura H."/>
            <person name="Nagase T."/>
            <person name="Ohara O."/>
            <person name="Koga H."/>
        </authorList>
    </citation>
    <scope>NUCLEOTIDE SEQUENCE [LARGE SCALE MRNA] (ISOFORM 1)</scope>
    <source>
        <tissue>Pancreatic islet</tissue>
    </source>
</reference>
<reference key="2">
    <citation type="journal article" date="2005" name="Science">
        <title>The transcriptional landscape of the mammalian genome.</title>
        <authorList>
            <person name="Carninci P."/>
            <person name="Kasukawa T."/>
            <person name="Katayama S."/>
            <person name="Gough J."/>
            <person name="Frith M.C."/>
            <person name="Maeda N."/>
            <person name="Oyama R."/>
            <person name="Ravasi T."/>
            <person name="Lenhard B."/>
            <person name="Wells C."/>
            <person name="Kodzius R."/>
            <person name="Shimokawa K."/>
            <person name="Bajic V.B."/>
            <person name="Brenner S.E."/>
            <person name="Batalov S."/>
            <person name="Forrest A.R."/>
            <person name="Zavolan M."/>
            <person name="Davis M.J."/>
            <person name="Wilming L.G."/>
            <person name="Aidinis V."/>
            <person name="Allen J.E."/>
            <person name="Ambesi-Impiombato A."/>
            <person name="Apweiler R."/>
            <person name="Aturaliya R.N."/>
            <person name="Bailey T.L."/>
            <person name="Bansal M."/>
            <person name="Baxter L."/>
            <person name="Beisel K.W."/>
            <person name="Bersano T."/>
            <person name="Bono H."/>
            <person name="Chalk A.M."/>
            <person name="Chiu K.P."/>
            <person name="Choudhary V."/>
            <person name="Christoffels A."/>
            <person name="Clutterbuck D.R."/>
            <person name="Crowe M.L."/>
            <person name="Dalla E."/>
            <person name="Dalrymple B.P."/>
            <person name="de Bono B."/>
            <person name="Della Gatta G."/>
            <person name="di Bernardo D."/>
            <person name="Down T."/>
            <person name="Engstrom P."/>
            <person name="Fagiolini M."/>
            <person name="Faulkner G."/>
            <person name="Fletcher C.F."/>
            <person name="Fukushima T."/>
            <person name="Furuno M."/>
            <person name="Futaki S."/>
            <person name="Gariboldi M."/>
            <person name="Georgii-Hemming P."/>
            <person name="Gingeras T.R."/>
            <person name="Gojobori T."/>
            <person name="Green R.E."/>
            <person name="Gustincich S."/>
            <person name="Harbers M."/>
            <person name="Hayashi Y."/>
            <person name="Hensch T.K."/>
            <person name="Hirokawa N."/>
            <person name="Hill D."/>
            <person name="Huminiecki L."/>
            <person name="Iacono M."/>
            <person name="Ikeo K."/>
            <person name="Iwama A."/>
            <person name="Ishikawa T."/>
            <person name="Jakt M."/>
            <person name="Kanapin A."/>
            <person name="Katoh M."/>
            <person name="Kawasawa Y."/>
            <person name="Kelso J."/>
            <person name="Kitamura H."/>
            <person name="Kitano H."/>
            <person name="Kollias G."/>
            <person name="Krishnan S.P."/>
            <person name="Kruger A."/>
            <person name="Kummerfeld S.K."/>
            <person name="Kurochkin I.V."/>
            <person name="Lareau L.F."/>
            <person name="Lazarevic D."/>
            <person name="Lipovich L."/>
            <person name="Liu J."/>
            <person name="Liuni S."/>
            <person name="McWilliam S."/>
            <person name="Madan Babu M."/>
            <person name="Madera M."/>
            <person name="Marchionni L."/>
            <person name="Matsuda H."/>
            <person name="Matsuzawa S."/>
            <person name="Miki H."/>
            <person name="Mignone F."/>
            <person name="Miyake S."/>
            <person name="Morris K."/>
            <person name="Mottagui-Tabar S."/>
            <person name="Mulder N."/>
            <person name="Nakano N."/>
            <person name="Nakauchi H."/>
            <person name="Ng P."/>
            <person name="Nilsson R."/>
            <person name="Nishiguchi S."/>
            <person name="Nishikawa S."/>
            <person name="Nori F."/>
            <person name="Ohara O."/>
            <person name="Okazaki Y."/>
            <person name="Orlando V."/>
            <person name="Pang K.C."/>
            <person name="Pavan W.J."/>
            <person name="Pavesi G."/>
            <person name="Pesole G."/>
            <person name="Petrovsky N."/>
            <person name="Piazza S."/>
            <person name="Reed J."/>
            <person name="Reid J.F."/>
            <person name="Ring B.Z."/>
            <person name="Ringwald M."/>
            <person name="Rost B."/>
            <person name="Ruan Y."/>
            <person name="Salzberg S.L."/>
            <person name="Sandelin A."/>
            <person name="Schneider C."/>
            <person name="Schoenbach C."/>
            <person name="Sekiguchi K."/>
            <person name="Semple C.A."/>
            <person name="Seno S."/>
            <person name="Sessa L."/>
            <person name="Sheng Y."/>
            <person name="Shibata Y."/>
            <person name="Shimada H."/>
            <person name="Shimada K."/>
            <person name="Silva D."/>
            <person name="Sinclair B."/>
            <person name="Sperling S."/>
            <person name="Stupka E."/>
            <person name="Sugiura K."/>
            <person name="Sultana R."/>
            <person name="Takenaka Y."/>
            <person name="Taki K."/>
            <person name="Tammoja K."/>
            <person name="Tan S.L."/>
            <person name="Tang S."/>
            <person name="Taylor M.S."/>
            <person name="Tegner J."/>
            <person name="Teichmann S.A."/>
            <person name="Ueda H.R."/>
            <person name="van Nimwegen E."/>
            <person name="Verardo R."/>
            <person name="Wei C.L."/>
            <person name="Yagi K."/>
            <person name="Yamanishi H."/>
            <person name="Zabarovsky E."/>
            <person name="Zhu S."/>
            <person name="Zimmer A."/>
            <person name="Hide W."/>
            <person name="Bult C."/>
            <person name="Grimmond S.M."/>
            <person name="Teasdale R.D."/>
            <person name="Liu E.T."/>
            <person name="Brusic V."/>
            <person name="Quackenbush J."/>
            <person name="Wahlestedt C."/>
            <person name="Mattick J.S."/>
            <person name="Hume D.A."/>
            <person name="Kai C."/>
            <person name="Sasaki D."/>
            <person name="Tomaru Y."/>
            <person name="Fukuda S."/>
            <person name="Kanamori-Katayama M."/>
            <person name="Suzuki M."/>
            <person name="Aoki J."/>
            <person name="Arakawa T."/>
            <person name="Iida J."/>
            <person name="Imamura K."/>
            <person name="Itoh M."/>
            <person name="Kato T."/>
            <person name="Kawaji H."/>
            <person name="Kawagashira N."/>
            <person name="Kawashima T."/>
            <person name="Kojima M."/>
            <person name="Kondo S."/>
            <person name="Konno H."/>
            <person name="Nakano K."/>
            <person name="Ninomiya N."/>
            <person name="Nishio T."/>
            <person name="Okada M."/>
            <person name="Plessy C."/>
            <person name="Shibata K."/>
            <person name="Shiraki T."/>
            <person name="Suzuki S."/>
            <person name="Tagami M."/>
            <person name="Waki K."/>
            <person name="Watahiki A."/>
            <person name="Okamura-Oho Y."/>
            <person name="Suzuki H."/>
            <person name="Kawai J."/>
            <person name="Hayashizaki Y."/>
        </authorList>
    </citation>
    <scope>NUCLEOTIDE SEQUENCE [LARGE SCALE MRNA] (ISOFORMS 1; 2 AND 3)</scope>
    <source>
        <strain>C57BL/6J</strain>
        <tissue>Blastocyst</tissue>
        <tissue>Bone marrow</tissue>
        <tissue>Cerebellum</tissue>
        <tissue>Colon</tissue>
        <tissue>Diencephalon</tissue>
        <tissue>Egg</tissue>
        <tissue>Head</tissue>
        <tissue>Hypothalamus</tissue>
        <tissue>Mammary gland</tissue>
        <tissue>Spleen</tissue>
        <tissue>Urinary bladder</tissue>
    </source>
</reference>
<reference key="3">
    <citation type="journal article" date="2004" name="Genome Res.">
        <title>The status, quality, and expansion of the NIH full-length cDNA project: the Mammalian Gene Collection (MGC).</title>
        <authorList>
            <consortium name="The MGC Project Team"/>
        </authorList>
    </citation>
    <scope>NUCLEOTIDE SEQUENCE [LARGE SCALE MRNA] (ISOFORM 1)</scope>
    <source>
        <strain>FVB/N</strain>
        <tissue>Eye</tissue>
        <tissue>Salivary gland</tissue>
    </source>
</reference>
<reference key="4">
    <citation type="journal article" date="2010" name="Cell">
        <title>A tissue-specific atlas of mouse protein phosphorylation and expression.</title>
        <authorList>
            <person name="Huttlin E.L."/>
            <person name="Jedrychowski M.P."/>
            <person name="Elias J.E."/>
            <person name="Goswami T."/>
            <person name="Rad R."/>
            <person name="Beausoleil S.A."/>
            <person name="Villen J."/>
            <person name="Haas W."/>
            <person name="Sowa M.E."/>
            <person name="Gygi S.P."/>
        </authorList>
    </citation>
    <scope>IDENTIFICATION BY MASS SPECTROMETRY [LARGE SCALE ANALYSIS]</scope>
    <source>
        <tissue>Brain</tissue>
        <tissue>Heart</tissue>
        <tissue>Kidney</tissue>
        <tissue>Liver</tissue>
        <tissue>Lung</tissue>
        <tissue>Pancreas</tissue>
        <tissue>Testis</tissue>
    </source>
</reference>
<reference key="5">
    <citation type="journal article" date="2012" name="Cell">
        <title>An SMN-dependent U12 splicing event essential for motor circuit function.</title>
        <authorList>
            <person name="Lotti F."/>
            <person name="Imlach W.L."/>
            <person name="Saieva L."/>
            <person name="Beck E.S."/>
            <person name="Hao le T."/>
            <person name="Li D.K."/>
            <person name="Jiao W."/>
            <person name="Mentis G.Z."/>
            <person name="Beattie C.E."/>
            <person name="McCabe B.D."/>
            <person name="Pellizzoni L."/>
        </authorList>
    </citation>
    <scope>TISSUE SPECIFICITY</scope>
</reference>
<reference key="6">
    <citation type="journal article" date="2018" name="Biochem. Biophys. Res. Commun.">
        <title>Stasimon/Tmem41b localizes to mitochondria-associated ER membranes and is essential for mouse embryonic development.</title>
        <authorList>
            <person name="Van Alstyne M."/>
            <person name="Lotti F."/>
            <person name="Dal Mas A."/>
            <person name="Area-Gomez E."/>
            <person name="Pellizzoni L."/>
        </authorList>
    </citation>
    <scope>SUBCELLULAR LOCATION</scope>
    <scope>DISRUPTION PHENOTYPE</scope>
</reference>
<accession>Q8K1A5</accession>
<accession>Q3TKT0</accession>
<accession>Q3TLK6</accession>
<accession>Q8C1X2</accession>
<accession>Q8CBS5</accession>
<accession>Q8CBU5</accession>
<sequence>MAKGRVADRSPTEMLHSTPAGDRAVRTQGSAAPGSKDHLNEKPCAEAGSARTSLLILVSIFSCAAFVMFLVYKNFPQLSEEERVNMKVPRDMDDAKALGKVLSKYKDTFYVQVLVAYFATYIFLQTFAIPGSIFLSILSGFLYPFPLALFLVCLCSGLGASFCYMLSYLVGRPVVYKYLTEKAVKWSQQVERHREHLINYIIFLRITPFLPNWFINITSPVINVPLKVFFIGTFLGVAPPSFVAIKAGTTLHQLTTAGEAVSWSSVFILMVLALLSILPAIFQKQLKQKFE</sequence>
<dbReference type="EMBL" id="AK172876">
    <property type="protein sequence ID" value="BAD32154.1"/>
    <property type="molecule type" value="mRNA"/>
</dbReference>
<dbReference type="EMBL" id="AK029327">
    <property type="protein sequence ID" value="BAC26397.1"/>
    <property type="molecule type" value="mRNA"/>
</dbReference>
<dbReference type="EMBL" id="AK033997">
    <property type="protein sequence ID" value="BAC28541.1"/>
    <property type="molecule type" value="mRNA"/>
</dbReference>
<dbReference type="EMBL" id="AK035266">
    <property type="protein sequence ID" value="BAC29008.1"/>
    <property type="molecule type" value="mRNA"/>
</dbReference>
<dbReference type="EMBL" id="AK035365">
    <property type="protein sequence ID" value="BAC29048.1"/>
    <property type="molecule type" value="mRNA"/>
</dbReference>
<dbReference type="EMBL" id="AK038953">
    <property type="protein sequence ID" value="BAC30179.1"/>
    <property type="molecule type" value="mRNA"/>
</dbReference>
<dbReference type="EMBL" id="AK078357">
    <property type="protein sequence ID" value="BAC37235.1"/>
    <property type="molecule type" value="mRNA"/>
</dbReference>
<dbReference type="EMBL" id="AK090100">
    <property type="protein sequence ID" value="BAC41091.1"/>
    <property type="molecule type" value="mRNA"/>
</dbReference>
<dbReference type="EMBL" id="AK139961">
    <property type="protein sequence ID" value="BAE24197.1"/>
    <property type="molecule type" value="mRNA"/>
</dbReference>
<dbReference type="EMBL" id="AK150353">
    <property type="protein sequence ID" value="BAE29490.1"/>
    <property type="molecule type" value="mRNA"/>
</dbReference>
<dbReference type="EMBL" id="AK153048">
    <property type="protein sequence ID" value="BAE31676.1"/>
    <property type="molecule type" value="mRNA"/>
</dbReference>
<dbReference type="EMBL" id="AK165226">
    <property type="protein sequence ID" value="BAE38087.1"/>
    <property type="molecule type" value="mRNA"/>
</dbReference>
<dbReference type="EMBL" id="AK166427">
    <property type="protein sequence ID" value="BAE38770.1"/>
    <property type="molecule type" value="mRNA"/>
</dbReference>
<dbReference type="EMBL" id="AK166455">
    <property type="protein sequence ID" value="BAE38786.1"/>
    <property type="molecule type" value="mRNA"/>
</dbReference>
<dbReference type="EMBL" id="AK166845">
    <property type="protein sequence ID" value="BAE39064.1"/>
    <property type="molecule type" value="mRNA"/>
</dbReference>
<dbReference type="EMBL" id="BC026515">
    <property type="protein sequence ID" value="AAH26515.1"/>
    <property type="molecule type" value="mRNA"/>
</dbReference>
<dbReference type="EMBL" id="BC027103">
    <property type="protein sequence ID" value="AAH27103.1"/>
    <property type="molecule type" value="mRNA"/>
</dbReference>
<dbReference type="CCDS" id="CCDS21742.1">
    <molecule id="Q8K1A5-1"/>
</dbReference>
<dbReference type="RefSeq" id="NP_705745.3">
    <molecule id="Q8K1A5-1"/>
    <property type="nucleotide sequence ID" value="NM_153525.5"/>
</dbReference>
<dbReference type="RefSeq" id="XP_030098359.1">
    <molecule id="Q8K1A5-1"/>
    <property type="nucleotide sequence ID" value="XM_030242499.1"/>
</dbReference>
<dbReference type="SMR" id="Q8K1A5"/>
<dbReference type="BioGRID" id="231436">
    <property type="interactions" value="3"/>
</dbReference>
<dbReference type="FunCoup" id="Q8K1A5">
    <property type="interactions" value="1647"/>
</dbReference>
<dbReference type="STRING" id="10090.ENSMUSP00000091641"/>
<dbReference type="iPTMnet" id="Q8K1A5"/>
<dbReference type="PhosphoSitePlus" id="Q8K1A5"/>
<dbReference type="SwissPalm" id="Q8K1A5"/>
<dbReference type="PaxDb" id="10090-ENSMUSP00000091641"/>
<dbReference type="PeptideAtlas" id="Q8K1A5"/>
<dbReference type="ProteomicsDB" id="260701">
    <molecule id="Q8K1A5-1"/>
</dbReference>
<dbReference type="ProteomicsDB" id="260702">
    <molecule id="Q8K1A5-2"/>
</dbReference>
<dbReference type="ProteomicsDB" id="260703">
    <molecule id="Q8K1A5-3"/>
</dbReference>
<dbReference type="Pumba" id="Q8K1A5"/>
<dbReference type="Antibodypedia" id="11559">
    <property type="antibodies" value="18 antibodies from 11 providers"/>
</dbReference>
<dbReference type="DNASU" id="233724"/>
<dbReference type="Ensembl" id="ENSMUST00000094097.12">
    <molecule id="Q8K1A5-1"/>
    <property type="protein sequence ID" value="ENSMUSP00000091641.6"/>
    <property type="gene ID" value="ENSMUSG00000047554.15"/>
</dbReference>
<dbReference type="Ensembl" id="ENSMUST00000118429.8">
    <molecule id="Q8K1A5-1"/>
    <property type="protein sequence ID" value="ENSMUSP00000112574.2"/>
    <property type="gene ID" value="ENSMUSG00000047554.15"/>
</dbReference>
<dbReference type="Ensembl" id="ENSMUST00000119929.8">
    <molecule id="Q8K1A5-2"/>
    <property type="protein sequence ID" value="ENSMUSP00000113215.2"/>
    <property type="gene ID" value="ENSMUSG00000047554.15"/>
</dbReference>
<dbReference type="GeneID" id="233724"/>
<dbReference type="KEGG" id="mmu:233724"/>
<dbReference type="UCSC" id="uc009jen.1">
    <molecule id="Q8K1A5-1"/>
    <property type="organism name" value="mouse"/>
</dbReference>
<dbReference type="AGR" id="MGI:1289225"/>
<dbReference type="CTD" id="440026"/>
<dbReference type="MGI" id="MGI:1289225">
    <property type="gene designation" value="Tmem41b"/>
</dbReference>
<dbReference type="VEuPathDB" id="HostDB:ENSMUSG00000047554"/>
<dbReference type="eggNOG" id="KOG3140">
    <property type="taxonomic scope" value="Eukaryota"/>
</dbReference>
<dbReference type="GeneTree" id="ENSGT00940000156956"/>
<dbReference type="HOGENOM" id="CLU_038944_0_1_1"/>
<dbReference type="InParanoid" id="Q8K1A5"/>
<dbReference type="OMA" id="CIKIPRD"/>
<dbReference type="OrthoDB" id="3364966at2759"/>
<dbReference type="PhylomeDB" id="Q8K1A5"/>
<dbReference type="TreeFam" id="TF314301"/>
<dbReference type="BioGRID-ORCS" id="233724">
    <property type="hits" value="24 hits in 81 CRISPR screens"/>
</dbReference>
<dbReference type="ChiTaRS" id="Tmem41b">
    <property type="organism name" value="mouse"/>
</dbReference>
<dbReference type="PRO" id="PR:Q8K1A5"/>
<dbReference type="Proteomes" id="UP000000589">
    <property type="component" value="Chromosome 7"/>
</dbReference>
<dbReference type="RNAct" id="Q8K1A5">
    <property type="molecule type" value="protein"/>
</dbReference>
<dbReference type="Bgee" id="ENSMUSG00000047554">
    <property type="expression patterns" value="Expressed in blastoderm cell in morula and 230 other cell types or tissues"/>
</dbReference>
<dbReference type="ExpressionAtlas" id="Q8K1A5">
    <property type="expression patterns" value="baseline and differential"/>
</dbReference>
<dbReference type="GO" id="GO:0005789">
    <property type="term" value="C:endoplasmic reticulum membrane"/>
    <property type="evidence" value="ECO:0000250"/>
    <property type="project" value="UniProtKB"/>
</dbReference>
<dbReference type="GO" id="GO:0044233">
    <property type="term" value="C:mitochondria-associated endoplasmic reticulum membrane contact site"/>
    <property type="evidence" value="ECO:0000314"/>
    <property type="project" value="UniProtKB"/>
</dbReference>
<dbReference type="GO" id="GO:0017128">
    <property type="term" value="F:phospholipid scramblase activity"/>
    <property type="evidence" value="ECO:0000250"/>
    <property type="project" value="UniProtKB"/>
</dbReference>
<dbReference type="GO" id="GO:0000045">
    <property type="term" value="P:autophagosome assembly"/>
    <property type="evidence" value="ECO:0000250"/>
    <property type="project" value="UniProtKB"/>
</dbReference>
<dbReference type="GO" id="GO:0032365">
    <property type="term" value="P:intracellular lipid transport"/>
    <property type="evidence" value="ECO:0007669"/>
    <property type="project" value="Ensembl"/>
</dbReference>
<dbReference type="GO" id="GO:0044830">
    <property type="term" value="P:modulation by host of viral RNA genome replication"/>
    <property type="evidence" value="ECO:0007669"/>
    <property type="project" value="Ensembl"/>
</dbReference>
<dbReference type="GO" id="GO:0007399">
    <property type="term" value="P:nervous system development"/>
    <property type="evidence" value="ECO:0007669"/>
    <property type="project" value="UniProtKB-KW"/>
</dbReference>
<dbReference type="InterPro" id="IPR045014">
    <property type="entry name" value="TM41A/B"/>
</dbReference>
<dbReference type="InterPro" id="IPR032816">
    <property type="entry name" value="VTT_dom"/>
</dbReference>
<dbReference type="PANTHER" id="PTHR43220">
    <property type="match status" value="1"/>
</dbReference>
<dbReference type="PANTHER" id="PTHR43220:SF18">
    <property type="entry name" value="TRANSMEMBRANE PROTEIN 41B"/>
    <property type="match status" value="1"/>
</dbReference>
<dbReference type="Pfam" id="PF09335">
    <property type="entry name" value="VTT_dom"/>
    <property type="match status" value="1"/>
</dbReference>
<evidence type="ECO:0000250" key="1">
    <source>
        <dbReference type="UniProtKB" id="A1A5V7"/>
    </source>
</evidence>
<evidence type="ECO:0000250" key="2">
    <source>
        <dbReference type="UniProtKB" id="Q5BJD5"/>
    </source>
</evidence>
<evidence type="ECO:0000255" key="3"/>
<evidence type="ECO:0000256" key="4">
    <source>
        <dbReference type="SAM" id="MobiDB-lite"/>
    </source>
</evidence>
<evidence type="ECO:0000269" key="5">
    <source>
    </source>
</evidence>
<evidence type="ECO:0000269" key="6">
    <source>
    </source>
</evidence>
<evidence type="ECO:0000303" key="7">
    <source>
    </source>
</evidence>
<evidence type="ECO:0000303" key="8">
    <source>
    </source>
</evidence>
<evidence type="ECO:0000303" key="9">
    <source>
    </source>
</evidence>
<evidence type="ECO:0000305" key="10"/>
<evidence type="ECO:0000312" key="11">
    <source>
        <dbReference type="MGI" id="MGI:1289225"/>
    </source>
</evidence>
<organism>
    <name type="scientific">Mus musculus</name>
    <name type="common">Mouse</name>
    <dbReference type="NCBI Taxonomy" id="10090"/>
    <lineage>
        <taxon>Eukaryota</taxon>
        <taxon>Metazoa</taxon>
        <taxon>Chordata</taxon>
        <taxon>Craniata</taxon>
        <taxon>Vertebrata</taxon>
        <taxon>Euteleostomi</taxon>
        <taxon>Mammalia</taxon>
        <taxon>Eutheria</taxon>
        <taxon>Euarchontoglires</taxon>
        <taxon>Glires</taxon>
        <taxon>Rodentia</taxon>
        <taxon>Myomorpha</taxon>
        <taxon>Muroidea</taxon>
        <taxon>Muridae</taxon>
        <taxon>Murinae</taxon>
        <taxon>Mus</taxon>
        <taxon>Mus</taxon>
    </lineage>
</organism>
<feature type="chain" id="PRO_0000291938" description="Transmembrane protein 41B">
    <location>
        <begin position="1"/>
        <end position="291"/>
    </location>
</feature>
<feature type="transmembrane region" description="Helical" evidence="3">
    <location>
        <begin position="52"/>
        <end position="72"/>
    </location>
</feature>
<feature type="transmembrane region" description="Helical" evidence="3">
    <location>
        <begin position="109"/>
        <end position="129"/>
    </location>
</feature>
<feature type="transmembrane region" description="Helical" evidence="3">
    <location>
        <begin position="147"/>
        <end position="169"/>
    </location>
</feature>
<feature type="transmembrane region" description="Helical" evidence="3">
    <location>
        <begin position="197"/>
        <end position="217"/>
    </location>
</feature>
<feature type="transmembrane region" description="Helical" evidence="3">
    <location>
        <begin position="225"/>
        <end position="245"/>
    </location>
</feature>
<feature type="transmembrane region" description="Helical" evidence="3">
    <location>
        <begin position="262"/>
        <end position="282"/>
    </location>
</feature>
<feature type="region of interest" description="Disordered" evidence="4">
    <location>
        <begin position="1"/>
        <end position="43"/>
    </location>
</feature>
<feature type="region of interest" description="VTT domain; required for its function in autophagy" evidence="2">
    <location>
        <begin position="140"/>
        <end position="251"/>
    </location>
</feature>
<feature type="compositionally biased region" description="Basic and acidic residues" evidence="4">
    <location>
        <begin position="1"/>
        <end position="11"/>
    </location>
</feature>
<feature type="modified residue" description="Phosphothreonine" evidence="2">
    <location>
        <position position="18"/>
    </location>
</feature>
<feature type="modified residue" description="Phosphoserine" evidence="2">
    <location>
        <position position="35"/>
    </location>
</feature>
<feature type="splice variant" id="VSP_026318" description="In isoform 3." evidence="8">
    <location>
        <begin position="1"/>
        <end position="85"/>
    </location>
</feature>
<feature type="splice variant" id="VSP_026319" description="In isoform 2." evidence="8">
    <location>
        <begin position="1"/>
        <end position="67"/>
    </location>
</feature>
<feature type="sequence conflict" description="In Ref. 2; BAE38770/BAE38786." evidence="10" ref="2">
    <original>G</original>
    <variation>D</variation>
    <location>
        <position position="34"/>
    </location>
</feature>
<feature type="sequence conflict" description="In Ref. 2; BAC41091." evidence="10" ref="2">
    <original>K</original>
    <variation>Q</variation>
    <location>
        <position position="104"/>
    </location>
</feature>
<feature type="sequence conflict" description="In Ref. 2; BAC29048." evidence="10" ref="2">
    <original>F</original>
    <variation>L</variation>
    <location>
        <position position="109"/>
    </location>
</feature>
<feature type="sequence conflict" description="In Ref. 2; BAE38770/BAE38786." evidence="10" ref="2">
    <original>H</original>
    <variation>Y</variation>
    <location>
        <position position="252"/>
    </location>
</feature>
<feature type="sequence conflict" description="In Ref. 2; BAC41091." evidence="10" ref="2">
    <original>S</original>
    <variation>P</variation>
    <location>
        <position position="262"/>
    </location>
</feature>
<feature type="sequence conflict" description="In Ref. 2; BAE38770/BAE38786." evidence="10" ref="2">
    <original>S</original>
    <variation>N</variation>
    <location>
        <position position="264"/>
    </location>
</feature>
<feature type="sequence conflict" description="In Ref. 2; BAE38770/BAE38786." evidence="10" ref="2">
    <original>V</original>
    <variation>I</variation>
    <location>
        <position position="271"/>
    </location>
</feature>
<feature type="sequence conflict" description="In Ref. 2; BAE38770/BAE38786." evidence="10" ref="2">
    <original>Q</original>
    <variation>K</variation>
    <location>
        <position position="285"/>
    </location>
</feature>
<protein>
    <recommendedName>
        <fullName evidence="10">Transmembrane protein 41B</fullName>
    </recommendedName>
    <alternativeName>
        <fullName evidence="9">Protein stasimon</fullName>
    </alternativeName>
</protein>
<keyword id="KW-0025">Alternative splicing</keyword>
<keyword id="KW-0072">Autophagy</keyword>
<keyword id="KW-0256">Endoplasmic reticulum</keyword>
<keyword id="KW-0445">Lipid transport</keyword>
<keyword id="KW-0472">Membrane</keyword>
<keyword id="KW-0524">Neurogenesis</keyword>
<keyword id="KW-0597">Phosphoprotein</keyword>
<keyword id="KW-1185">Reference proteome</keyword>
<keyword id="KW-0812">Transmembrane</keyword>
<keyword id="KW-1133">Transmembrane helix</keyword>
<keyword id="KW-0813">Transport</keyword>
<comment type="function">
    <text evidence="1 2">Phospholipid scramblase involved in lipid homeostasis and membrane dynamics processes. Has phospholipid scramblase activity toward cholesterol and phosphatidylserine, as well as phosphatidylethanolamine and phosphatidylcholine. Required for autophagosome formation: participates in early stages of autophagosome biogenesis at the endoplasmic reticulum (ER) membrane by reequilibrating the leaflets of the ER as lipids are extracted by ATG2 (ATG2A or ATG2B) to mediate autophagosome assembly. In addition to autophagy, involved in other processes in which phospholipid scramblase activity is required (By similarity). Required for normal motor neuron development (By similarity).</text>
</comment>
<comment type="catalytic activity">
    <reaction evidence="2">
        <text>a 1,2-diacyl-sn-glycero-3-phospho-L-serine(in) = a 1,2-diacyl-sn-glycero-3-phospho-L-serine(out)</text>
        <dbReference type="Rhea" id="RHEA:38663"/>
        <dbReference type="ChEBI" id="CHEBI:57262"/>
    </reaction>
</comment>
<comment type="catalytic activity">
    <reaction evidence="2">
        <text>cholesterol(in) = cholesterol(out)</text>
        <dbReference type="Rhea" id="RHEA:39747"/>
        <dbReference type="ChEBI" id="CHEBI:16113"/>
    </reaction>
</comment>
<comment type="catalytic activity">
    <reaction evidence="2">
        <text>a 1,2-diacyl-sn-glycero-3-phosphocholine(in) = a 1,2-diacyl-sn-glycero-3-phosphocholine(out)</text>
        <dbReference type="Rhea" id="RHEA:38571"/>
        <dbReference type="ChEBI" id="CHEBI:57643"/>
    </reaction>
</comment>
<comment type="catalytic activity">
    <reaction evidence="2">
        <text>a 1,2-diacyl-sn-glycero-3-phosphoethanolamine(in) = a 1,2-diacyl-sn-glycero-3-phosphoethanolamine(out)</text>
        <dbReference type="Rhea" id="RHEA:38895"/>
        <dbReference type="ChEBI" id="CHEBI:64612"/>
    </reaction>
</comment>
<comment type="subunit">
    <text evidence="2">Interacts with VMP1. Interacts with COPA, COPB1, VDAC1 and ERLIN2. Interacts with ATG2A. Interacts with SURF4.</text>
</comment>
<comment type="subcellular location">
    <subcellularLocation>
        <location evidence="6">Endoplasmic reticulum membrane</location>
        <topology evidence="3">Multi-pass membrane protein</topology>
    </subcellularLocation>
    <subcellularLocation>
        <location evidence="2">Endomembrane system</location>
    </subcellularLocation>
    <text evidence="6">Localized to specific membrane structures termed mitochondria-associated membranes (MAMs) which connect the endoplasmic reticulum (ER) and the mitochondria.</text>
</comment>
<comment type="alternative products">
    <event type="alternative splicing"/>
    <isoform>
        <id>Q8K1A5-1</id>
        <name>1</name>
        <sequence type="displayed"/>
    </isoform>
    <isoform>
        <id>Q8K1A5-2</id>
        <name>2</name>
        <sequence type="described" ref="VSP_026319"/>
    </isoform>
    <isoform>
        <id>Q8K1A5-3</id>
        <name>3</name>
        <sequence type="described" ref="VSP_026318"/>
    </isoform>
</comment>
<comment type="tissue specificity">
    <text evidence="5">Expressed in brain, spinal cord, kidney and first lumbar dorsal root ganglia during postnatal development. Expressed in motor neurons and proprioceptive neurons.</text>
</comment>
<comment type="domain">
    <text evidence="2">The VTT domain was previously called the SNARE-assoc domain. As there is no evidence that this domain associates with SNARE proteins, it was renamed as VMP1, TMEM41, and TVP38 (VTT) domain.</text>
</comment>
<comment type="disruption phenotype">
    <text evidence="6">Causes early embryonic lethality (PubMed:30352685). Conditional deletion in the liver leads to decreased number of circulating lipoproteins (PubMed:30352685).</text>
</comment>
<comment type="similarity">
    <text evidence="10">Belongs to the TMEM41 family.</text>
</comment>
<proteinExistence type="evidence at protein level"/>